<dbReference type="EMBL" id="AE005673">
    <property type="protein sequence ID" value="AAK25283.1"/>
    <property type="molecule type" value="Genomic_DNA"/>
</dbReference>
<dbReference type="PIR" id="G87660">
    <property type="entry name" value="G87660"/>
</dbReference>
<dbReference type="RefSeq" id="NP_422115.1">
    <property type="nucleotide sequence ID" value="NC_002696.2"/>
</dbReference>
<dbReference type="SMR" id="Q9A383"/>
<dbReference type="STRING" id="190650.CC_3321"/>
<dbReference type="EnsemblBacteria" id="AAK25283">
    <property type="protein sequence ID" value="AAK25283"/>
    <property type="gene ID" value="CC_3321"/>
</dbReference>
<dbReference type="KEGG" id="ccr:CC_3321"/>
<dbReference type="PATRIC" id="fig|190650.5.peg.3328"/>
<dbReference type="eggNOG" id="COG0257">
    <property type="taxonomic scope" value="Bacteria"/>
</dbReference>
<dbReference type="HOGENOM" id="CLU_135723_3_2_5"/>
<dbReference type="BioCyc" id="CAULO:CC3321-MONOMER"/>
<dbReference type="Proteomes" id="UP000001816">
    <property type="component" value="Chromosome"/>
</dbReference>
<dbReference type="GO" id="GO:1990904">
    <property type="term" value="C:ribonucleoprotein complex"/>
    <property type="evidence" value="ECO:0007669"/>
    <property type="project" value="UniProtKB-KW"/>
</dbReference>
<dbReference type="GO" id="GO:0005840">
    <property type="term" value="C:ribosome"/>
    <property type="evidence" value="ECO:0007669"/>
    <property type="project" value="UniProtKB-KW"/>
</dbReference>
<dbReference type="GO" id="GO:0003735">
    <property type="term" value="F:structural constituent of ribosome"/>
    <property type="evidence" value="ECO:0007669"/>
    <property type="project" value="InterPro"/>
</dbReference>
<dbReference type="GO" id="GO:0006412">
    <property type="term" value="P:translation"/>
    <property type="evidence" value="ECO:0007669"/>
    <property type="project" value="UniProtKB-UniRule"/>
</dbReference>
<dbReference type="HAMAP" id="MF_00251">
    <property type="entry name" value="Ribosomal_bL36"/>
    <property type="match status" value="1"/>
</dbReference>
<dbReference type="InterPro" id="IPR000473">
    <property type="entry name" value="Ribosomal_bL36"/>
</dbReference>
<dbReference type="InterPro" id="IPR035977">
    <property type="entry name" value="Ribosomal_bL36_sp"/>
</dbReference>
<dbReference type="InterPro" id="IPR047621">
    <property type="entry name" value="Ribosomal_L36_bact"/>
</dbReference>
<dbReference type="NCBIfam" id="NF002021">
    <property type="entry name" value="PRK00831.1"/>
    <property type="match status" value="1"/>
</dbReference>
<dbReference type="NCBIfam" id="TIGR01022">
    <property type="entry name" value="rpmJ_bact"/>
    <property type="match status" value="1"/>
</dbReference>
<dbReference type="PANTHER" id="PTHR47781">
    <property type="entry name" value="50S RIBOSOMAL PROTEIN L36 2"/>
    <property type="match status" value="1"/>
</dbReference>
<dbReference type="PANTHER" id="PTHR47781:SF1">
    <property type="entry name" value="LARGE RIBOSOMAL SUBUNIT PROTEIN BL36B"/>
    <property type="match status" value="1"/>
</dbReference>
<dbReference type="Pfam" id="PF00444">
    <property type="entry name" value="Ribosomal_L36"/>
    <property type="match status" value="1"/>
</dbReference>
<dbReference type="SUPFAM" id="SSF57840">
    <property type="entry name" value="Ribosomal protein L36"/>
    <property type="match status" value="1"/>
</dbReference>
<dbReference type="PROSITE" id="PS00828">
    <property type="entry name" value="RIBOSOMAL_L36"/>
    <property type="match status" value="1"/>
</dbReference>
<accession>Q9A383</accession>
<keyword id="KW-1185">Reference proteome</keyword>
<keyword id="KW-0687">Ribonucleoprotein</keyword>
<keyword id="KW-0689">Ribosomal protein</keyword>
<evidence type="ECO:0000255" key="1">
    <source>
        <dbReference type="HAMAP-Rule" id="MF_00251"/>
    </source>
</evidence>
<evidence type="ECO:0000305" key="2"/>
<organism>
    <name type="scientific">Caulobacter vibrioides (strain ATCC 19089 / CIP 103742 / CB 15)</name>
    <name type="common">Caulobacter crescentus</name>
    <dbReference type="NCBI Taxonomy" id="190650"/>
    <lineage>
        <taxon>Bacteria</taxon>
        <taxon>Pseudomonadati</taxon>
        <taxon>Pseudomonadota</taxon>
        <taxon>Alphaproteobacteria</taxon>
        <taxon>Caulobacterales</taxon>
        <taxon>Caulobacteraceae</taxon>
        <taxon>Caulobacter</taxon>
    </lineage>
</organism>
<protein>
    <recommendedName>
        <fullName evidence="1">Large ribosomal subunit protein bL36</fullName>
    </recommendedName>
    <alternativeName>
        <fullName evidence="2">50S ribosomal protein L36</fullName>
    </alternativeName>
</protein>
<gene>
    <name evidence="1" type="primary">rpmJ</name>
    <name type="ordered locus">CC_3321</name>
</gene>
<proteinExistence type="inferred from homology"/>
<sequence>MKVRSSLKSLKGRHRDCKMVRRKGVIYIINKTDPRFKAKQG</sequence>
<feature type="chain" id="PRO_0000126168" description="Large ribosomal subunit protein bL36">
    <location>
        <begin position="1"/>
        <end position="41"/>
    </location>
</feature>
<reference key="1">
    <citation type="journal article" date="2001" name="Proc. Natl. Acad. Sci. U.S.A.">
        <title>Complete genome sequence of Caulobacter crescentus.</title>
        <authorList>
            <person name="Nierman W.C."/>
            <person name="Feldblyum T.V."/>
            <person name="Laub M.T."/>
            <person name="Paulsen I.T."/>
            <person name="Nelson K.E."/>
            <person name="Eisen J.A."/>
            <person name="Heidelberg J.F."/>
            <person name="Alley M.R.K."/>
            <person name="Ohta N."/>
            <person name="Maddock J.R."/>
            <person name="Potocka I."/>
            <person name="Nelson W.C."/>
            <person name="Newton A."/>
            <person name="Stephens C."/>
            <person name="Phadke N.D."/>
            <person name="Ely B."/>
            <person name="DeBoy R.T."/>
            <person name="Dodson R.J."/>
            <person name="Durkin A.S."/>
            <person name="Gwinn M.L."/>
            <person name="Haft D.H."/>
            <person name="Kolonay J.F."/>
            <person name="Smit J."/>
            <person name="Craven M.B."/>
            <person name="Khouri H.M."/>
            <person name="Shetty J."/>
            <person name="Berry K.J."/>
            <person name="Utterback T.R."/>
            <person name="Tran K."/>
            <person name="Wolf A.M."/>
            <person name="Vamathevan J.J."/>
            <person name="Ermolaeva M.D."/>
            <person name="White O."/>
            <person name="Salzberg S.L."/>
            <person name="Venter J.C."/>
            <person name="Shapiro L."/>
            <person name="Fraser C.M."/>
        </authorList>
    </citation>
    <scope>NUCLEOTIDE SEQUENCE [LARGE SCALE GENOMIC DNA]</scope>
    <source>
        <strain>ATCC 19089 / CIP 103742 / CB 15</strain>
    </source>
</reference>
<name>RL36_CAUVC</name>
<comment type="similarity">
    <text evidence="1">Belongs to the bacterial ribosomal protein bL36 family.</text>
</comment>